<feature type="chain" id="PRO_1000079539" description="Large ribosomal subunit protein uL10">
    <location>
        <begin position="1"/>
        <end position="174"/>
    </location>
</feature>
<proteinExistence type="inferred from homology"/>
<accession>A9NAL2</accession>
<name>RL10_COXBR</name>
<evidence type="ECO:0000255" key="1">
    <source>
        <dbReference type="HAMAP-Rule" id="MF_00362"/>
    </source>
</evidence>
<evidence type="ECO:0000305" key="2"/>
<gene>
    <name evidence="1" type="primary">rplJ</name>
    <name type="ordered locus">COXBURSA331_A0325</name>
</gene>
<dbReference type="EMBL" id="CP000890">
    <property type="protein sequence ID" value="ABX78025.1"/>
    <property type="molecule type" value="Genomic_DNA"/>
</dbReference>
<dbReference type="RefSeq" id="WP_005771616.1">
    <property type="nucleotide sequence ID" value="NC_010117.1"/>
</dbReference>
<dbReference type="SMR" id="A9NAL2"/>
<dbReference type="KEGG" id="cbs:COXBURSA331_A0325"/>
<dbReference type="HOGENOM" id="CLU_092227_0_1_6"/>
<dbReference type="GO" id="GO:0015934">
    <property type="term" value="C:large ribosomal subunit"/>
    <property type="evidence" value="ECO:0007669"/>
    <property type="project" value="InterPro"/>
</dbReference>
<dbReference type="GO" id="GO:0070180">
    <property type="term" value="F:large ribosomal subunit rRNA binding"/>
    <property type="evidence" value="ECO:0007669"/>
    <property type="project" value="UniProtKB-UniRule"/>
</dbReference>
<dbReference type="GO" id="GO:0003735">
    <property type="term" value="F:structural constituent of ribosome"/>
    <property type="evidence" value="ECO:0007669"/>
    <property type="project" value="InterPro"/>
</dbReference>
<dbReference type="GO" id="GO:0006412">
    <property type="term" value="P:translation"/>
    <property type="evidence" value="ECO:0007669"/>
    <property type="project" value="UniProtKB-UniRule"/>
</dbReference>
<dbReference type="CDD" id="cd05797">
    <property type="entry name" value="Ribosomal_L10"/>
    <property type="match status" value="1"/>
</dbReference>
<dbReference type="Gene3D" id="3.30.70.1730">
    <property type="match status" value="1"/>
</dbReference>
<dbReference type="Gene3D" id="6.10.250.290">
    <property type="match status" value="1"/>
</dbReference>
<dbReference type="HAMAP" id="MF_00362">
    <property type="entry name" value="Ribosomal_uL10"/>
    <property type="match status" value="1"/>
</dbReference>
<dbReference type="InterPro" id="IPR001790">
    <property type="entry name" value="Ribosomal_uL10"/>
</dbReference>
<dbReference type="InterPro" id="IPR043141">
    <property type="entry name" value="Ribosomal_uL10-like_sf"/>
</dbReference>
<dbReference type="InterPro" id="IPR022973">
    <property type="entry name" value="Ribosomal_uL10_bac"/>
</dbReference>
<dbReference type="InterPro" id="IPR047865">
    <property type="entry name" value="Ribosomal_uL10_bac_type"/>
</dbReference>
<dbReference type="InterPro" id="IPR002363">
    <property type="entry name" value="Ribosomal_uL10_CS_bac"/>
</dbReference>
<dbReference type="NCBIfam" id="NF000955">
    <property type="entry name" value="PRK00099.1-1"/>
    <property type="match status" value="1"/>
</dbReference>
<dbReference type="PANTHER" id="PTHR11560">
    <property type="entry name" value="39S RIBOSOMAL PROTEIN L10, MITOCHONDRIAL"/>
    <property type="match status" value="1"/>
</dbReference>
<dbReference type="Pfam" id="PF00466">
    <property type="entry name" value="Ribosomal_L10"/>
    <property type="match status" value="1"/>
</dbReference>
<dbReference type="SUPFAM" id="SSF160369">
    <property type="entry name" value="Ribosomal protein L10-like"/>
    <property type="match status" value="1"/>
</dbReference>
<dbReference type="PROSITE" id="PS01109">
    <property type="entry name" value="RIBOSOMAL_L10"/>
    <property type="match status" value="1"/>
</dbReference>
<protein>
    <recommendedName>
        <fullName evidence="1">Large ribosomal subunit protein uL10</fullName>
    </recommendedName>
    <alternativeName>
        <fullName evidence="2">50S ribosomal protein L10</fullName>
    </alternativeName>
</protein>
<keyword id="KW-0687">Ribonucleoprotein</keyword>
<keyword id="KW-0689">Ribosomal protein</keyword>
<keyword id="KW-0694">RNA-binding</keyword>
<keyword id="KW-0699">rRNA-binding</keyword>
<sequence length="174" mass="19122">MALNLEQKKAMVAEITDIANQAVSAVAADYRGLTVSEMSDLRKSAREARVHMRVYRNTLARRAFKETTYACLEEVLTGPIVLFFSQEEPGAAARLIEKFIKEHERLEVKGLALGGELLPAEKLKAVARLPSREEALSQLAAVLLAPVTKLVRTLNEPIAQVARVMAAVRDQKAA</sequence>
<organism>
    <name type="scientific">Coxiella burnetii (strain RSA 331 / Henzerling II)</name>
    <dbReference type="NCBI Taxonomy" id="360115"/>
    <lineage>
        <taxon>Bacteria</taxon>
        <taxon>Pseudomonadati</taxon>
        <taxon>Pseudomonadota</taxon>
        <taxon>Gammaproteobacteria</taxon>
        <taxon>Legionellales</taxon>
        <taxon>Coxiellaceae</taxon>
        <taxon>Coxiella</taxon>
    </lineage>
</organism>
<comment type="function">
    <text evidence="1">Forms part of the ribosomal stalk, playing a central role in the interaction of the ribosome with GTP-bound translation factors.</text>
</comment>
<comment type="subunit">
    <text evidence="1">Part of the ribosomal stalk of the 50S ribosomal subunit. The N-terminus interacts with L11 and the large rRNA to form the base of the stalk. The C-terminus forms an elongated spine to which L12 dimers bind in a sequential fashion forming a multimeric L10(L12)X complex.</text>
</comment>
<comment type="similarity">
    <text evidence="1">Belongs to the universal ribosomal protein uL10 family.</text>
</comment>
<reference key="1">
    <citation type="submission" date="2007-11" db="EMBL/GenBank/DDBJ databases">
        <title>Genome sequencing of phylogenetically and phenotypically diverse Coxiella burnetii isolates.</title>
        <authorList>
            <person name="Seshadri R."/>
            <person name="Samuel J.E."/>
        </authorList>
    </citation>
    <scope>NUCLEOTIDE SEQUENCE [LARGE SCALE GENOMIC DNA]</scope>
    <source>
        <strain>RSA 331 / Henzerling II</strain>
    </source>
</reference>